<keyword id="KW-0067">ATP-binding</keyword>
<keyword id="KW-0238">DNA-binding</keyword>
<keyword id="KW-0255">Endonuclease</keyword>
<keyword id="KW-0378">Hydrolase</keyword>
<keyword id="KW-0540">Nuclease</keyword>
<keyword id="KW-0547">Nucleotide-binding</keyword>
<keyword id="KW-1185">Reference proteome</keyword>
<keyword id="KW-0694">RNA-binding</keyword>
<keyword id="KW-0699">rRNA-binding</keyword>
<name>MUTS2_CLOK5</name>
<reference key="1">
    <citation type="journal article" date="2008" name="Proc. Natl. Acad. Sci. U.S.A.">
        <title>The genome of Clostridium kluyveri, a strict anaerobe with unique metabolic features.</title>
        <authorList>
            <person name="Seedorf H."/>
            <person name="Fricke W.F."/>
            <person name="Veith B."/>
            <person name="Brueggemann H."/>
            <person name="Liesegang H."/>
            <person name="Strittmatter A."/>
            <person name="Miethke M."/>
            <person name="Buckel W."/>
            <person name="Hinderberger J."/>
            <person name="Li F."/>
            <person name="Hagemeier C."/>
            <person name="Thauer R.K."/>
            <person name="Gottschalk G."/>
        </authorList>
    </citation>
    <scope>NUCLEOTIDE SEQUENCE [LARGE SCALE GENOMIC DNA]</scope>
    <source>
        <strain>ATCC 8527 / DSM 555 / NBRC 12016 / NCIMB 10680 / K1</strain>
    </source>
</reference>
<proteinExistence type="inferred from homology"/>
<sequence>MNEKSLRILEFYKVKDELKKYTNTNAAKDLVDNLKPYDNIHDVREHLEETEEALKLIISRGNPPFDGVYDVRQGVKMAQKGSILMPAQIFRIGAILKASRRFEKYIKAKGEGEGFRIIEDICQGIVLLKGLEDKIFISIESEDEISDRASSLLYNIRKSIRDKNASVRDKVNSLIRNYSSYLQDNLYTIRGDRYVLPVRAENKALVPGLVHDQSSSGSTLYIEPMALVNLNNEIKELKLKEKAEIDRILYELSKEIHDNIVVIKNNADIIWELDFIFAKAKFGSELNGNIPIVNDNCIIDIVEGRHPLIDRKTVVPMDVYMGKDFTCLVITGPNTGGKTVALKTMGLLHIMALSGLMIPARENSTVGFFTEIFADIGDEQSIEQNLSTFSSHMTNIINIINNSDEKSLILFDELGAGTDPTEGAALAVSILENLKDRGSMIVATTHYSELKAYALKSNGVENASVEFDVDTLKPTYKLMIGIPGKSNAFEISKRLGLPEFIIKAARENIASEALKFEDLIQSLQEKRIKAENYFREAEILKREAAKIKEKYEQKAIRLQEVRDKSITEAHRKAREIIRESKEEADRILKDIRELEKMGYSSSVKHELEERRKMLKDKLENVEENLYKAKSEDGQRLKSVKEGEEVFIPSLNQKVLVLSKPDNKGEVQVQAGIMKISVNLKELRAPKGSTKNTDKKLKREANLNLRSVATSVDLRGMDSIEAAYITDKYLDDAYVAGLKEVTIIHGKGTGILRSSITNMLKSHSHVKNYRIGEYGEGGTGVTIVELK</sequence>
<protein>
    <recommendedName>
        <fullName evidence="1">Endonuclease MutS2</fullName>
        <ecNumber evidence="1">3.1.-.-</ecNumber>
    </recommendedName>
    <alternativeName>
        <fullName evidence="1">Ribosome-associated protein quality control-upstream factor</fullName>
        <shortName evidence="1">RQC-upstream factor</shortName>
        <shortName evidence="1">RqcU</shortName>
        <ecNumber evidence="1">3.6.4.-</ecNumber>
    </alternativeName>
</protein>
<comment type="function">
    <text evidence="1">Endonuclease that is involved in the suppression of homologous recombination and thus may have a key role in the control of bacterial genetic diversity.</text>
</comment>
<comment type="function">
    <text evidence="1">Acts as a ribosome collision sensor, splitting the ribosome into its 2 subunits. Detects stalled/collided 70S ribosomes which it binds and splits by an ATP-hydrolysis driven conformational change. Acts upstream of the ribosome quality control system (RQC), a ribosome-associated complex that mediates the extraction of incompletely synthesized nascent chains from stalled ribosomes and their subsequent degradation. Probably generates substrates for RQC.</text>
</comment>
<comment type="subunit">
    <text evidence="1">Homodimer. Binds to stalled ribosomes, contacting rRNA.</text>
</comment>
<comment type="similarity">
    <text evidence="1">Belongs to the DNA mismatch repair MutS family. MutS2 subfamily.</text>
</comment>
<organism>
    <name type="scientific">Clostridium kluyveri (strain ATCC 8527 / DSM 555 / NBRC 12016 / NCIMB 10680 / K1)</name>
    <dbReference type="NCBI Taxonomy" id="431943"/>
    <lineage>
        <taxon>Bacteria</taxon>
        <taxon>Bacillati</taxon>
        <taxon>Bacillota</taxon>
        <taxon>Clostridia</taxon>
        <taxon>Eubacteriales</taxon>
        <taxon>Clostridiaceae</taxon>
        <taxon>Clostridium</taxon>
    </lineage>
</organism>
<feature type="chain" id="PRO_1000093351" description="Endonuclease MutS2">
    <location>
        <begin position="1"/>
        <end position="786"/>
    </location>
</feature>
<feature type="domain" description="Smr" evidence="1">
    <location>
        <begin position="711"/>
        <end position="786"/>
    </location>
</feature>
<feature type="binding site" evidence="1">
    <location>
        <begin position="332"/>
        <end position="339"/>
    </location>
    <ligand>
        <name>ATP</name>
        <dbReference type="ChEBI" id="CHEBI:30616"/>
    </ligand>
</feature>
<gene>
    <name evidence="1" type="primary">mutS2</name>
    <name evidence="1" type="synonym">rqcU</name>
    <name type="ordered locus">CKL_3183</name>
</gene>
<dbReference type="EC" id="3.1.-.-" evidence="1"/>
<dbReference type="EC" id="3.6.4.-" evidence="1"/>
<dbReference type="EMBL" id="CP000673">
    <property type="protein sequence ID" value="EDK35191.1"/>
    <property type="molecule type" value="Genomic_DNA"/>
</dbReference>
<dbReference type="RefSeq" id="WP_012103528.1">
    <property type="nucleotide sequence ID" value="NC_009706.1"/>
</dbReference>
<dbReference type="SMR" id="A5N245"/>
<dbReference type="STRING" id="431943.CKL_3183"/>
<dbReference type="KEGG" id="ckl:CKL_3183"/>
<dbReference type="eggNOG" id="COG1193">
    <property type="taxonomic scope" value="Bacteria"/>
</dbReference>
<dbReference type="HOGENOM" id="CLU_011252_2_1_9"/>
<dbReference type="Proteomes" id="UP000002411">
    <property type="component" value="Chromosome"/>
</dbReference>
<dbReference type="GO" id="GO:0005524">
    <property type="term" value="F:ATP binding"/>
    <property type="evidence" value="ECO:0007669"/>
    <property type="project" value="UniProtKB-UniRule"/>
</dbReference>
<dbReference type="GO" id="GO:0016887">
    <property type="term" value="F:ATP hydrolysis activity"/>
    <property type="evidence" value="ECO:0007669"/>
    <property type="project" value="InterPro"/>
</dbReference>
<dbReference type="GO" id="GO:0140664">
    <property type="term" value="F:ATP-dependent DNA damage sensor activity"/>
    <property type="evidence" value="ECO:0007669"/>
    <property type="project" value="InterPro"/>
</dbReference>
<dbReference type="GO" id="GO:0004519">
    <property type="term" value="F:endonuclease activity"/>
    <property type="evidence" value="ECO:0007669"/>
    <property type="project" value="UniProtKB-UniRule"/>
</dbReference>
<dbReference type="GO" id="GO:0030983">
    <property type="term" value="F:mismatched DNA binding"/>
    <property type="evidence" value="ECO:0007669"/>
    <property type="project" value="InterPro"/>
</dbReference>
<dbReference type="GO" id="GO:0043023">
    <property type="term" value="F:ribosomal large subunit binding"/>
    <property type="evidence" value="ECO:0007669"/>
    <property type="project" value="UniProtKB-UniRule"/>
</dbReference>
<dbReference type="GO" id="GO:0019843">
    <property type="term" value="F:rRNA binding"/>
    <property type="evidence" value="ECO:0007669"/>
    <property type="project" value="UniProtKB-UniRule"/>
</dbReference>
<dbReference type="GO" id="GO:0006298">
    <property type="term" value="P:mismatch repair"/>
    <property type="evidence" value="ECO:0007669"/>
    <property type="project" value="InterPro"/>
</dbReference>
<dbReference type="GO" id="GO:0045910">
    <property type="term" value="P:negative regulation of DNA recombination"/>
    <property type="evidence" value="ECO:0007669"/>
    <property type="project" value="InterPro"/>
</dbReference>
<dbReference type="GO" id="GO:0072344">
    <property type="term" value="P:rescue of stalled ribosome"/>
    <property type="evidence" value="ECO:0007669"/>
    <property type="project" value="UniProtKB-UniRule"/>
</dbReference>
<dbReference type="CDD" id="cd03280">
    <property type="entry name" value="ABC_MutS2"/>
    <property type="match status" value="1"/>
</dbReference>
<dbReference type="CDD" id="cd06503">
    <property type="entry name" value="ATP-synt_Fo_b"/>
    <property type="match status" value="1"/>
</dbReference>
<dbReference type="FunFam" id="3.30.1370.110:FF:000007">
    <property type="entry name" value="Endonuclease MutS2"/>
    <property type="match status" value="1"/>
</dbReference>
<dbReference type="FunFam" id="3.40.50.300:FF:000830">
    <property type="entry name" value="Endonuclease MutS2"/>
    <property type="match status" value="1"/>
</dbReference>
<dbReference type="Gene3D" id="3.30.1370.110">
    <property type="match status" value="1"/>
</dbReference>
<dbReference type="Gene3D" id="3.40.50.300">
    <property type="entry name" value="P-loop containing nucleotide triphosphate hydrolases"/>
    <property type="match status" value="1"/>
</dbReference>
<dbReference type="HAMAP" id="MF_00092">
    <property type="entry name" value="MutS2"/>
    <property type="match status" value="1"/>
</dbReference>
<dbReference type="InterPro" id="IPR000432">
    <property type="entry name" value="DNA_mismatch_repair_MutS_C"/>
</dbReference>
<dbReference type="InterPro" id="IPR007696">
    <property type="entry name" value="DNA_mismatch_repair_MutS_core"/>
</dbReference>
<dbReference type="InterPro" id="IPR036187">
    <property type="entry name" value="DNA_mismatch_repair_MutS_sf"/>
</dbReference>
<dbReference type="InterPro" id="IPR046893">
    <property type="entry name" value="MSSS"/>
</dbReference>
<dbReference type="InterPro" id="IPR045076">
    <property type="entry name" value="MutS"/>
</dbReference>
<dbReference type="InterPro" id="IPR005747">
    <property type="entry name" value="MutS2"/>
</dbReference>
<dbReference type="InterPro" id="IPR027417">
    <property type="entry name" value="P-loop_NTPase"/>
</dbReference>
<dbReference type="InterPro" id="IPR002625">
    <property type="entry name" value="Smr_dom"/>
</dbReference>
<dbReference type="InterPro" id="IPR036063">
    <property type="entry name" value="Smr_dom_sf"/>
</dbReference>
<dbReference type="NCBIfam" id="TIGR01069">
    <property type="entry name" value="mutS2"/>
    <property type="match status" value="1"/>
</dbReference>
<dbReference type="PANTHER" id="PTHR48466:SF2">
    <property type="entry name" value="OS10G0509000 PROTEIN"/>
    <property type="match status" value="1"/>
</dbReference>
<dbReference type="PANTHER" id="PTHR48466">
    <property type="entry name" value="OS10G0509000 PROTEIN-RELATED"/>
    <property type="match status" value="1"/>
</dbReference>
<dbReference type="Pfam" id="PF20297">
    <property type="entry name" value="MSSS"/>
    <property type="match status" value="1"/>
</dbReference>
<dbReference type="Pfam" id="PF00488">
    <property type="entry name" value="MutS_V"/>
    <property type="match status" value="1"/>
</dbReference>
<dbReference type="Pfam" id="PF01713">
    <property type="entry name" value="Smr"/>
    <property type="match status" value="1"/>
</dbReference>
<dbReference type="PIRSF" id="PIRSF005814">
    <property type="entry name" value="MutS_YshD"/>
    <property type="match status" value="1"/>
</dbReference>
<dbReference type="SMART" id="SM00534">
    <property type="entry name" value="MUTSac"/>
    <property type="match status" value="1"/>
</dbReference>
<dbReference type="SMART" id="SM00533">
    <property type="entry name" value="MUTSd"/>
    <property type="match status" value="1"/>
</dbReference>
<dbReference type="SMART" id="SM00463">
    <property type="entry name" value="SMR"/>
    <property type="match status" value="1"/>
</dbReference>
<dbReference type="SUPFAM" id="SSF48334">
    <property type="entry name" value="DNA repair protein MutS, domain III"/>
    <property type="match status" value="1"/>
</dbReference>
<dbReference type="SUPFAM" id="SSF52540">
    <property type="entry name" value="P-loop containing nucleoside triphosphate hydrolases"/>
    <property type="match status" value="1"/>
</dbReference>
<dbReference type="SUPFAM" id="SSF160443">
    <property type="entry name" value="SMR domain-like"/>
    <property type="match status" value="1"/>
</dbReference>
<dbReference type="PROSITE" id="PS00486">
    <property type="entry name" value="DNA_MISMATCH_REPAIR_2"/>
    <property type="match status" value="1"/>
</dbReference>
<dbReference type="PROSITE" id="PS50828">
    <property type="entry name" value="SMR"/>
    <property type="match status" value="1"/>
</dbReference>
<accession>A5N245</accession>
<evidence type="ECO:0000255" key="1">
    <source>
        <dbReference type="HAMAP-Rule" id="MF_00092"/>
    </source>
</evidence>